<reference key="1">
    <citation type="journal article" date="1995" name="Nucleic Acids Res.">
        <title>Molecular cloning of cDNA encoding mouse Cdc21 and CDC46 homologs and characterization of the products: physical interaction between P1(MCM3) and CDC46 proteins.</title>
        <authorList>
            <person name="Kimura H."/>
            <person name="Takizawa N."/>
            <person name="Nozaki N."/>
            <person name="Sugimoto K."/>
        </authorList>
    </citation>
    <scope>NUCLEOTIDE SEQUENCE [MRNA]</scope>
</reference>
<reference key="2">
    <citation type="journal article" date="1998" name="Mol. Immunol.">
        <title>Expressed genes in interleukin-4 treated B cells identified by cDNA representational difference analysis.</title>
        <authorList>
            <person name="Chu C.C."/>
            <person name="Paul W.E."/>
        </authorList>
    </citation>
    <scope>NUCLEOTIDE SEQUENCE [MRNA] OF 503-602</scope>
    <source>
        <strain>BALB/cJ</strain>
        <tissue>Spleen</tissue>
    </source>
</reference>
<reference key="3">
    <citation type="journal article" date="1999" name="Mol. Cell. Biol.">
        <title>Biochemical analysis of the intrinsic Mcm4-Mcm6-mcm7 DNA helicase activity.</title>
        <authorList>
            <person name="You Z."/>
            <person name="Komamura Y."/>
            <person name="Ishimi Y."/>
        </authorList>
    </citation>
    <scope>FUNCTION</scope>
    <scope>IDENTIFICATION IN THE MCM2-7 COMPLEX</scope>
    <scope>MUTAGENESIS OF 573-ASP-GLU-574</scope>
</reference>
<reference key="4">
    <citation type="journal article" date="2002" name="J. Biol. Chem.">
        <title>Roles of Mcm7 and Mcm4 subunits in the DNA helicase activity of the mouse Mcm4/6/7 complex.</title>
        <authorList>
            <person name="You Z."/>
            <person name="Ishimi Y."/>
            <person name="Masai H."/>
            <person name="Hanaoka F."/>
        </authorList>
    </citation>
    <scope>FUNCTION</scope>
    <scope>IDENTIFICATION IN THE MCM2-7 COMPLEX</scope>
    <scope>MUTAGENESIS OF 305-CYS--CYS-308 AND 327-CYS--CYS-330</scope>
    <scope>CATALYTIC ACTIVITY</scope>
</reference>
<reference key="5">
    <citation type="journal article" date="2010" name="Cell">
        <title>A tissue-specific atlas of mouse protein phosphorylation and expression.</title>
        <authorList>
            <person name="Huttlin E.L."/>
            <person name="Jedrychowski M.P."/>
            <person name="Elias J.E."/>
            <person name="Goswami T."/>
            <person name="Rad R."/>
            <person name="Beausoleil S.A."/>
            <person name="Villen J."/>
            <person name="Haas W."/>
            <person name="Sowa M.E."/>
            <person name="Gygi S.P."/>
        </authorList>
    </citation>
    <scope>PHOSPHORYLATION [LARGE SCALE ANALYSIS] AT THR-19 AND SER-130</scope>
    <scope>IDENTIFICATION BY MASS SPECTROMETRY [LARGE SCALE ANALYSIS]</scope>
    <source>
        <tissue>Heart</tissue>
        <tissue>Kidney</tissue>
        <tissue>Liver</tissue>
        <tissue>Lung</tissue>
        <tissue>Pancreas</tissue>
        <tissue>Spleen</tissue>
        <tissue>Testis</tissue>
    </source>
</reference>
<reference key="6">
    <citation type="journal article" date="2013" name="Mol. Cell">
        <title>SIRT5-mediated lysine desuccinylation impacts diverse metabolic pathways.</title>
        <authorList>
            <person name="Park J."/>
            <person name="Chen Y."/>
            <person name="Tishkoff D.X."/>
            <person name="Peng C."/>
            <person name="Tan M."/>
            <person name="Dai L."/>
            <person name="Xie Z."/>
            <person name="Zhang Y."/>
            <person name="Zwaans B.M."/>
            <person name="Skinner M.E."/>
            <person name="Lombard D.B."/>
            <person name="Zhao Y."/>
        </authorList>
    </citation>
    <scope>ACETYLATION [LARGE SCALE ANALYSIS] AT LYS-857</scope>
    <scope>IDENTIFICATION BY MASS SPECTROMETRY [LARGE SCALE ANALYSIS]</scope>
    <source>
        <tissue>Embryonic fibroblast</tissue>
    </source>
</reference>
<reference key="7">
    <citation type="journal article" date="2015" name="Nat. Struct. Mol. Biol.">
        <title>A new vertebrate SUMO enzyme family reveals insights into SUMO-chain assembly.</title>
        <authorList>
            <person name="Eisenhardt N."/>
            <person name="Chaugule V.K."/>
            <person name="Koidl S."/>
            <person name="Droescher M."/>
            <person name="Dogan E."/>
            <person name="Rettich J."/>
            <person name="Sutinen P."/>
            <person name="Imanishi S.Y."/>
            <person name="Hofmann K."/>
            <person name="Palvimo J.J."/>
            <person name="Pichler A."/>
        </authorList>
    </citation>
    <scope>SUMOYLATION</scope>
</reference>
<organism>
    <name type="scientific">Mus musculus</name>
    <name type="common">Mouse</name>
    <dbReference type="NCBI Taxonomy" id="10090"/>
    <lineage>
        <taxon>Eukaryota</taxon>
        <taxon>Metazoa</taxon>
        <taxon>Chordata</taxon>
        <taxon>Craniata</taxon>
        <taxon>Vertebrata</taxon>
        <taxon>Euteleostomi</taxon>
        <taxon>Mammalia</taxon>
        <taxon>Eutheria</taxon>
        <taxon>Euarchontoglires</taxon>
        <taxon>Glires</taxon>
        <taxon>Rodentia</taxon>
        <taxon>Myomorpha</taxon>
        <taxon>Muroidea</taxon>
        <taxon>Muridae</taxon>
        <taxon>Murinae</taxon>
        <taxon>Mus</taxon>
        <taxon>Mus</taxon>
    </lineage>
</organism>
<protein>
    <recommendedName>
        <fullName>DNA replication licensing factor MCM4</fullName>
        <ecNumber evidence="4 5">3.6.4.12</ecNumber>
    </recommendedName>
    <alternativeName>
        <fullName>CDC21 homolog</fullName>
    </alternativeName>
    <alternativeName>
        <fullName>P1-CDC21</fullName>
    </alternativeName>
</protein>
<proteinExistence type="evidence at protein level"/>
<sequence length="862" mass="96736">MSSPASTPSRRSSRRGRVTPTQSLRSEESRSSPNRRRRGEDSSTGELLPMPTSPGADLQSPPAQNALFSSPPQMHSLAIPLDFDVSSPLTYGTPSSRVEGTPRSGVRGTPVRQRPDLGSARKGLQVDLQSDGAAAEDIVPSEQSLGQKLVIWGTDVNVATCKENFQRFLQCFTDPLAKEEENVGIDITQPLYMQQLGEINITGEPFLNVNCEHIKSFSKNLYRQLISYPQEVIPTFDMAVNEIFFDRYPDSILEHQIQVRPFNALKTKSMRNLNPEDIDQLITISGMVIRTSQLIPEMQEAFFQCQVCAHTTRVEIDRGRIAEPCSCVHCHTTHSMALIHNRSFFSDKQMIKLQESPEDMPAGQTPHTIVLFAHNDLVDKVQPGDRVNVTGIYRAVPIRVNPRVSNVKSVYKTHIDVIHYRKTDAKRLHGLDEEAEQKLFSEKRVKLLKELSRKPDIYERLASALAPSIYEHEDIKKGILLQLFGGTRKDFSHTGRGKFRAEINILLCGDPGTSKSQLLQYVYNLVPRGQYTSGKGSSAVGLTAYVMKDPETRQLVLQTGALVLSDNGICCIDEFDKMNESTRSVLHEVMEQQTLSIAKAGIICQLNARTSVLAAANPIESQWNPKKTTIENIQLPHTLLSRFDLIFLMLDPQDEAYDRRLAHHLVSLYYQSEEQVEEEFLDMAVLKDYIAYAHSTIMPRLSEEASQALIEAYVNMRKIGSSRGMVSAYPRQLESLIRLAEAHAKVRFSNKVEAIDVEEAKRLHREALKQSATDPRTGIVDISILTTGMSATSRKRKEELAEALRKLILSKGKTPALKYQQLFEDIRGQSDTAITKDMFEEALRALADDDFLTVTGKTVRLL</sequence>
<dbReference type="EC" id="3.6.4.12" evidence="4 5"/>
<dbReference type="EMBL" id="D26089">
    <property type="protein sequence ID" value="BAA05082.1"/>
    <property type="molecule type" value="mRNA"/>
</dbReference>
<dbReference type="EMBL" id="U89402">
    <property type="protein sequence ID" value="AAC36509.1"/>
    <property type="molecule type" value="mRNA"/>
</dbReference>
<dbReference type="CCDS" id="CCDS27977.1"/>
<dbReference type="PIR" id="S56766">
    <property type="entry name" value="S56766"/>
</dbReference>
<dbReference type="RefSeq" id="NP_032591.3">
    <property type="nucleotide sequence ID" value="NM_008565.3"/>
</dbReference>
<dbReference type="SMR" id="P49717"/>
<dbReference type="BioGRID" id="201347">
    <property type="interactions" value="22"/>
</dbReference>
<dbReference type="ComplexPortal" id="CPX-2941">
    <property type="entry name" value="MCM complex"/>
</dbReference>
<dbReference type="CORUM" id="P49717"/>
<dbReference type="FunCoup" id="P49717">
    <property type="interactions" value="2705"/>
</dbReference>
<dbReference type="IntAct" id="P49717">
    <property type="interactions" value="3"/>
</dbReference>
<dbReference type="MINT" id="P49717"/>
<dbReference type="STRING" id="10090.ENSMUSP00000023353"/>
<dbReference type="GlyGen" id="P49717">
    <property type="glycosylation" value="3 sites, 1 O-linked glycan (1 site)"/>
</dbReference>
<dbReference type="iPTMnet" id="P49717"/>
<dbReference type="PhosphoSitePlus" id="P49717"/>
<dbReference type="SwissPalm" id="P49717"/>
<dbReference type="jPOST" id="P49717"/>
<dbReference type="PaxDb" id="10090-ENSMUSP00000023353"/>
<dbReference type="PeptideAtlas" id="P49717"/>
<dbReference type="ProteomicsDB" id="295709"/>
<dbReference type="Pumba" id="P49717"/>
<dbReference type="Antibodypedia" id="1452">
    <property type="antibodies" value="466 antibodies from 36 providers"/>
</dbReference>
<dbReference type="DNASU" id="17217"/>
<dbReference type="Ensembl" id="ENSMUST00000023353.4">
    <property type="protein sequence ID" value="ENSMUSP00000023353.4"/>
    <property type="gene ID" value="ENSMUSG00000022673.6"/>
</dbReference>
<dbReference type="GeneID" id="17217"/>
<dbReference type="KEGG" id="mmu:17217"/>
<dbReference type="UCSC" id="uc007yhr.2">
    <property type="organism name" value="mouse"/>
</dbReference>
<dbReference type="AGR" id="MGI:103199"/>
<dbReference type="CTD" id="4173"/>
<dbReference type="MGI" id="MGI:103199">
    <property type="gene designation" value="Mcm4"/>
</dbReference>
<dbReference type="VEuPathDB" id="HostDB:ENSMUSG00000022673"/>
<dbReference type="eggNOG" id="KOG0478">
    <property type="taxonomic scope" value="Eukaryota"/>
</dbReference>
<dbReference type="GeneTree" id="ENSGT01110000267230"/>
<dbReference type="HOGENOM" id="CLU_000995_7_1_1"/>
<dbReference type="InParanoid" id="P49717"/>
<dbReference type="OMA" id="AFFKCNV"/>
<dbReference type="OrthoDB" id="10251574at2759"/>
<dbReference type="PhylomeDB" id="P49717"/>
<dbReference type="TreeFam" id="TF300463"/>
<dbReference type="Reactome" id="R-MMU-176187">
    <property type="pathway name" value="Activation of ATR in response to replication stress"/>
</dbReference>
<dbReference type="Reactome" id="R-MMU-68867">
    <property type="pathway name" value="Assembly of the pre-replicative complex"/>
</dbReference>
<dbReference type="Reactome" id="R-MMU-68949">
    <property type="pathway name" value="Orc1 removal from chromatin"/>
</dbReference>
<dbReference type="Reactome" id="R-MMU-68962">
    <property type="pathway name" value="Activation of the pre-replicative complex"/>
</dbReference>
<dbReference type="Reactome" id="R-MMU-69052">
    <property type="pathway name" value="Switching of origins to a post-replicative state"/>
</dbReference>
<dbReference type="BioGRID-ORCS" id="17217">
    <property type="hits" value="24 hits in 81 CRISPR screens"/>
</dbReference>
<dbReference type="CD-CODE" id="01CA17F3">
    <property type="entry name" value="Centrosome"/>
</dbReference>
<dbReference type="ChiTaRS" id="Mcm4">
    <property type="organism name" value="mouse"/>
</dbReference>
<dbReference type="PRO" id="PR:P49717"/>
<dbReference type="Proteomes" id="UP000000589">
    <property type="component" value="Chromosome 16"/>
</dbReference>
<dbReference type="RNAct" id="P49717">
    <property type="molecule type" value="protein"/>
</dbReference>
<dbReference type="Bgee" id="ENSMUSG00000022673">
    <property type="expression patterns" value="Expressed in indifferent gonad and 262 other cell types or tissues"/>
</dbReference>
<dbReference type="ExpressionAtlas" id="P49717">
    <property type="expression patterns" value="baseline and differential"/>
</dbReference>
<dbReference type="GO" id="GO:0071162">
    <property type="term" value="C:CMG complex"/>
    <property type="evidence" value="ECO:0000250"/>
    <property type="project" value="UniProtKB"/>
</dbReference>
<dbReference type="GO" id="GO:0042555">
    <property type="term" value="C:MCM complex"/>
    <property type="evidence" value="ECO:0000314"/>
    <property type="project" value="UniProtKB"/>
</dbReference>
<dbReference type="GO" id="GO:0005634">
    <property type="term" value="C:nucleus"/>
    <property type="evidence" value="ECO:0000303"/>
    <property type="project" value="ComplexPortal"/>
</dbReference>
<dbReference type="GO" id="GO:0005524">
    <property type="term" value="F:ATP binding"/>
    <property type="evidence" value="ECO:0007669"/>
    <property type="project" value="UniProtKB-KW"/>
</dbReference>
<dbReference type="GO" id="GO:0016887">
    <property type="term" value="F:ATP hydrolysis activity"/>
    <property type="evidence" value="ECO:0007669"/>
    <property type="project" value="RHEA"/>
</dbReference>
<dbReference type="GO" id="GO:0003678">
    <property type="term" value="F:DNA helicase activity"/>
    <property type="evidence" value="ECO:0007669"/>
    <property type="project" value="Ensembl"/>
</dbReference>
<dbReference type="GO" id="GO:0003697">
    <property type="term" value="F:single-stranded DNA binding"/>
    <property type="evidence" value="ECO:0000353"/>
    <property type="project" value="MGI"/>
</dbReference>
<dbReference type="GO" id="GO:0006260">
    <property type="term" value="P:DNA replication"/>
    <property type="evidence" value="ECO:0000353"/>
    <property type="project" value="MGI"/>
</dbReference>
<dbReference type="GO" id="GO:0006270">
    <property type="term" value="P:DNA replication initiation"/>
    <property type="evidence" value="ECO:0007669"/>
    <property type="project" value="InterPro"/>
</dbReference>
<dbReference type="GO" id="GO:0006279">
    <property type="term" value="P:premeiotic DNA replication"/>
    <property type="evidence" value="ECO:0000303"/>
    <property type="project" value="ComplexPortal"/>
</dbReference>
<dbReference type="CDD" id="cd17755">
    <property type="entry name" value="MCM4"/>
    <property type="match status" value="1"/>
</dbReference>
<dbReference type="FunFam" id="2.20.28.10:FF:000003">
    <property type="entry name" value="DNA helicase"/>
    <property type="match status" value="1"/>
</dbReference>
<dbReference type="FunFam" id="3.30.1640.10:FF:000001">
    <property type="entry name" value="DNA helicase"/>
    <property type="match status" value="1"/>
</dbReference>
<dbReference type="FunFam" id="3.40.50.300:FF:000217">
    <property type="entry name" value="DNA helicase"/>
    <property type="match status" value="1"/>
</dbReference>
<dbReference type="Gene3D" id="2.20.28.10">
    <property type="match status" value="1"/>
</dbReference>
<dbReference type="Gene3D" id="3.30.1640.10">
    <property type="entry name" value="mini-chromosome maintenance (MCM) complex, chain A, domain 1"/>
    <property type="match status" value="1"/>
</dbReference>
<dbReference type="Gene3D" id="2.40.50.140">
    <property type="entry name" value="Nucleic acid-binding proteins"/>
    <property type="match status" value="1"/>
</dbReference>
<dbReference type="Gene3D" id="3.40.50.300">
    <property type="entry name" value="P-loop containing nucleotide triphosphate hydrolases"/>
    <property type="match status" value="1"/>
</dbReference>
<dbReference type="InterPro" id="IPR031327">
    <property type="entry name" value="MCM"/>
</dbReference>
<dbReference type="InterPro" id="IPR008047">
    <property type="entry name" value="MCM_4"/>
</dbReference>
<dbReference type="InterPro" id="IPR018525">
    <property type="entry name" value="MCM_CS"/>
</dbReference>
<dbReference type="InterPro" id="IPR001208">
    <property type="entry name" value="MCM_dom"/>
</dbReference>
<dbReference type="InterPro" id="IPR041562">
    <property type="entry name" value="MCM_lid"/>
</dbReference>
<dbReference type="InterPro" id="IPR027925">
    <property type="entry name" value="MCM_N"/>
</dbReference>
<dbReference type="InterPro" id="IPR033762">
    <property type="entry name" value="MCM_OB"/>
</dbReference>
<dbReference type="InterPro" id="IPR012340">
    <property type="entry name" value="NA-bd_OB-fold"/>
</dbReference>
<dbReference type="InterPro" id="IPR027417">
    <property type="entry name" value="P-loop_NTPase"/>
</dbReference>
<dbReference type="PANTHER" id="PTHR11630">
    <property type="entry name" value="DNA REPLICATION LICENSING FACTOR MCM FAMILY MEMBER"/>
    <property type="match status" value="1"/>
</dbReference>
<dbReference type="PANTHER" id="PTHR11630:SF66">
    <property type="entry name" value="DNA REPLICATION LICENSING FACTOR MCM4"/>
    <property type="match status" value="1"/>
</dbReference>
<dbReference type="Pfam" id="PF00493">
    <property type="entry name" value="MCM"/>
    <property type="match status" value="1"/>
</dbReference>
<dbReference type="Pfam" id="PF21128">
    <property type="entry name" value="MCM4_WHD"/>
    <property type="match status" value="1"/>
</dbReference>
<dbReference type="Pfam" id="PF17855">
    <property type="entry name" value="MCM_lid"/>
    <property type="match status" value="1"/>
</dbReference>
<dbReference type="Pfam" id="PF14551">
    <property type="entry name" value="MCM_N"/>
    <property type="match status" value="1"/>
</dbReference>
<dbReference type="Pfam" id="PF17207">
    <property type="entry name" value="MCM_OB"/>
    <property type="match status" value="1"/>
</dbReference>
<dbReference type="PRINTS" id="PR01657">
    <property type="entry name" value="MCMFAMILY"/>
</dbReference>
<dbReference type="PRINTS" id="PR01660">
    <property type="entry name" value="MCMPROTEIN4"/>
</dbReference>
<dbReference type="SMART" id="SM00350">
    <property type="entry name" value="MCM"/>
    <property type="match status" value="1"/>
</dbReference>
<dbReference type="SUPFAM" id="SSF50249">
    <property type="entry name" value="Nucleic acid-binding proteins"/>
    <property type="match status" value="1"/>
</dbReference>
<dbReference type="SUPFAM" id="SSF52540">
    <property type="entry name" value="P-loop containing nucleoside triphosphate hydrolases"/>
    <property type="match status" value="1"/>
</dbReference>
<dbReference type="PROSITE" id="PS00847">
    <property type="entry name" value="MCM_1"/>
    <property type="match status" value="1"/>
</dbReference>
<dbReference type="PROSITE" id="PS50051">
    <property type="entry name" value="MCM_2"/>
    <property type="match status" value="1"/>
</dbReference>
<comment type="function">
    <text evidence="5">Acts as a component of the MCM2-7 complex (MCM complex) which is the replicative helicase essential for 'once per cell cycle' DNA replication initiation and elongation in eukaryotic cells. Core component of CDC45-MCM-GINS (CMG) helicase, the molecular machine that unwinds template DNA during replication, and around which the replisome is built. The active ATPase sites in the MCM2-7 ring are formed through the interaction surfaces of two neighboring subunits such that a critical structure of a conserved arginine finger motif is provided in trans relative to the ATP-binding site of the Walker A box of the adjacent subunit. The six ATPase active sites, however, are likely to contribute differentially to the complex helicase activity.</text>
</comment>
<comment type="catalytic activity">
    <reaction evidence="4 5">
        <text>ATP + H2O = ADP + phosphate + H(+)</text>
        <dbReference type="Rhea" id="RHEA:13065"/>
        <dbReference type="ChEBI" id="CHEBI:15377"/>
        <dbReference type="ChEBI" id="CHEBI:15378"/>
        <dbReference type="ChEBI" id="CHEBI:30616"/>
        <dbReference type="ChEBI" id="CHEBI:43474"/>
        <dbReference type="ChEBI" id="CHEBI:456216"/>
        <dbReference type="EC" id="3.6.4.12"/>
    </reaction>
    <physiologicalReaction direction="left-to-right" evidence="4 5">
        <dbReference type="Rhea" id="RHEA:13066"/>
    </physiologicalReaction>
</comment>
<comment type="subunit">
    <text evidence="2 5">Component of the MCM2-7 complex. The complex forms a toroidal hexameric ring with the proposed subunit order MCM2-MCM6-MCM4-MCM7-MCM3-MCM5. Component of the CMG helicase complex, a hexameric ring of related MCM2-7 subunits stabilized by CDC45 and the tetrameric GINS complex (PubMed:12207017). Interacts with MCMBP (By similarity).</text>
</comment>
<comment type="subcellular location">
    <subcellularLocation>
        <location evidence="1">Nucleus</location>
    </subcellularLocation>
    <subcellularLocation>
        <location evidence="1">Chromosome</location>
    </subcellularLocation>
    <text evidence="1">Associated with chromatin before the formation of nuclei and detaches from it as DNA replication progresses.</text>
</comment>
<comment type="PTM">
    <text evidence="6">Sumoylated; SUMO2 modified in response to stress caused by inhibition of proteasome activity (in vitro).</text>
</comment>
<comment type="miscellaneous">
    <text evidence="4">Early fractionation of eukaryotic MCM proteins yielded a variety of dimeric, trimeric and tetrameric complexes with unclear biological significance. Specifically a MCM467 subcomplex is shown to have in vitro helicase activity which is inhibited by the MCM2 subunit. The MCM2-7 hexamer is the proposed physiological active complex.</text>
</comment>
<comment type="similarity">
    <text evidence="7">Belongs to the MCM family.</text>
</comment>
<accession>P49717</accession>
<accession>O89056</accession>
<evidence type="ECO:0000250" key="1">
    <source>
        <dbReference type="UniProtKB" id="P30664"/>
    </source>
</evidence>
<evidence type="ECO:0000250" key="2">
    <source>
        <dbReference type="UniProtKB" id="P33991"/>
    </source>
</evidence>
<evidence type="ECO:0000256" key="3">
    <source>
        <dbReference type="SAM" id="MobiDB-lite"/>
    </source>
</evidence>
<evidence type="ECO:0000269" key="4">
    <source>
    </source>
</evidence>
<evidence type="ECO:0000269" key="5">
    <source>
    </source>
</evidence>
<evidence type="ECO:0000269" key="6">
    <source>
    </source>
</evidence>
<evidence type="ECO:0000305" key="7"/>
<evidence type="ECO:0007744" key="8">
    <source>
    </source>
</evidence>
<evidence type="ECO:0007744" key="9">
    <source>
    </source>
</evidence>
<gene>
    <name type="primary">Mcm4</name>
    <name type="synonym">Cdc21</name>
    <name type="synonym">Mcmd4</name>
</gene>
<name>MCM4_MOUSE</name>
<feature type="initiator methionine" description="Removed" evidence="2">
    <location>
        <position position="1"/>
    </location>
</feature>
<feature type="chain" id="PRO_0000194102" description="DNA replication licensing factor MCM4">
    <location>
        <begin position="2"/>
        <end position="862"/>
    </location>
</feature>
<feature type="domain" description="MCM">
    <location>
        <begin position="457"/>
        <end position="666"/>
    </location>
</feature>
<feature type="region of interest" description="Disordered" evidence="3">
    <location>
        <begin position="1"/>
        <end position="71"/>
    </location>
</feature>
<feature type="region of interest" description="Disordered" evidence="3">
    <location>
        <begin position="90"/>
        <end position="121"/>
    </location>
</feature>
<feature type="short sequence motif" description="Arginine finger">
    <location>
        <begin position="641"/>
        <end position="644"/>
    </location>
</feature>
<feature type="compositionally biased region" description="Low complexity" evidence="3">
    <location>
        <begin position="1"/>
        <end position="10"/>
    </location>
</feature>
<feature type="compositionally biased region" description="Polar residues" evidence="3">
    <location>
        <begin position="61"/>
        <end position="71"/>
    </location>
</feature>
<feature type="binding site" evidence="2">
    <location>
        <position position="470"/>
    </location>
    <ligand>
        <name>ATP</name>
        <dbReference type="ChEBI" id="CHEBI:30616"/>
        <label>2</label>
        <note>ligand shared with MCM7</note>
    </ligand>
</feature>
<feature type="binding site" evidence="2">
    <location>
        <position position="496"/>
    </location>
    <ligand>
        <name>ATP</name>
        <dbReference type="ChEBI" id="CHEBI:30616"/>
        <label>1</label>
        <note>ligand shared with MCM6</note>
    </ligand>
</feature>
<feature type="binding site" evidence="2">
    <location>
        <position position="515"/>
    </location>
    <ligand>
        <name>ATP</name>
        <dbReference type="ChEBI" id="CHEBI:30616"/>
        <label>2</label>
        <note>ligand shared with MCM7</note>
    </ligand>
</feature>
<feature type="binding site" evidence="2">
    <location>
        <position position="516"/>
    </location>
    <ligand>
        <name>ATP</name>
        <dbReference type="ChEBI" id="CHEBI:30616"/>
        <label>2</label>
        <note>ligand shared with MCM7</note>
    </ligand>
</feature>
<feature type="binding site" evidence="2">
    <location>
        <position position="617"/>
    </location>
    <ligand>
        <name>ATP</name>
        <dbReference type="ChEBI" id="CHEBI:30616"/>
        <label>2</label>
        <note>ligand shared with MCM7</note>
    </ligand>
</feature>
<feature type="binding site" evidence="2">
    <location>
        <position position="642"/>
    </location>
    <ligand>
        <name>ATP</name>
        <dbReference type="ChEBI" id="CHEBI:30616"/>
        <label>1</label>
        <note>ligand shared with MCM6</note>
    </ligand>
</feature>
<feature type="binding site" evidence="2">
    <location>
        <position position="731"/>
    </location>
    <ligand>
        <name>ATP</name>
        <dbReference type="ChEBI" id="CHEBI:30616"/>
        <label>1</label>
        <note>ligand shared with MCM6</note>
    </ligand>
</feature>
<feature type="binding site" evidence="2">
    <location>
        <position position="734"/>
    </location>
    <ligand>
        <name>ATP</name>
        <dbReference type="ChEBI" id="CHEBI:30616"/>
        <label>1</label>
        <note>ligand shared with MCM6</note>
    </ligand>
</feature>
<feature type="modified residue" description="N-acetylserine" evidence="2">
    <location>
        <position position="2"/>
    </location>
</feature>
<feature type="modified residue" description="Phosphoserine" evidence="2">
    <location>
        <position position="6"/>
    </location>
</feature>
<feature type="modified residue" description="Phosphothreonine" evidence="2">
    <location>
        <position position="7"/>
    </location>
</feature>
<feature type="modified residue" description="Phosphothreonine" evidence="8">
    <location>
        <position position="19"/>
    </location>
</feature>
<feature type="modified residue" description="Phosphoserine" evidence="2">
    <location>
        <position position="26"/>
    </location>
</feature>
<feature type="modified residue" description="Phosphoserine" evidence="2">
    <location>
        <position position="31"/>
    </location>
</feature>
<feature type="modified residue" description="Phosphoserine" evidence="2">
    <location>
        <position position="32"/>
    </location>
</feature>
<feature type="modified residue" description="Phosphothreonine" evidence="2">
    <location>
        <position position="101"/>
    </location>
</feature>
<feature type="modified residue" description="Phosphoserine" evidence="2">
    <location>
        <position position="104"/>
    </location>
</feature>
<feature type="modified residue" description="Phosphothreonine" evidence="2">
    <location>
        <position position="109"/>
    </location>
</feature>
<feature type="modified residue" description="Phosphoserine" evidence="2">
    <location>
        <position position="119"/>
    </location>
</feature>
<feature type="modified residue" description="Phosphoserine" evidence="8">
    <location>
        <position position="130"/>
    </location>
</feature>
<feature type="modified residue" description="Phosphoserine" evidence="2">
    <location>
        <position position="141"/>
    </location>
</feature>
<feature type="modified residue" description="Phosphoserine" evidence="2">
    <location>
        <position position="144"/>
    </location>
</feature>
<feature type="modified residue" description="N6-acetyllysine" evidence="2">
    <location>
        <position position="219"/>
    </location>
</feature>
<feature type="modified residue" description="N6-acetyllysine" evidence="2">
    <location>
        <position position="449"/>
    </location>
</feature>
<feature type="modified residue" description="N6-acetyllysine" evidence="9">
    <location>
        <position position="857"/>
    </location>
</feature>
<feature type="cross-link" description="Glycyl lysine isopeptide (Lys-Gly) (interchain with G-Cter in SUMO2)" evidence="2">
    <location>
        <position position="438"/>
    </location>
</feature>
<feature type="cross-link" description="Glycyl lysine isopeptide (Lys-Gly) (interchain with G-Cter in SUMO2)" evidence="2">
    <location>
        <position position="797"/>
    </location>
</feature>
<feature type="mutagenesis site" description="Results in unstable hexamers. Increased MCM complex DNA helicase activity." evidence="5">
    <original>CQVC</original>
    <variation>AQVA</variation>
    <location>
        <begin position="305"/>
        <end position="308"/>
    </location>
</feature>
<feature type="mutagenesis site" description="Results in unstable hexamers. Increased MCM complex DNA helicase activity." evidence="5">
    <original>CVHC</original>
    <variation>AVHA</variation>
    <location>
        <begin position="327"/>
        <end position="330"/>
    </location>
</feature>
<feature type="mutagenesis site" description="Decreased MCM complex DNA helicase activity. Reduced ssDNA binding. No effect on MCM complex formation. No effect on MCM complex ATP binding and ATPase activity." evidence="4">
    <original>DE</original>
    <variation>AA</variation>
    <location>
        <begin position="573"/>
        <end position="574"/>
    </location>
</feature>
<feature type="sequence conflict" description="In Ref. 2; AAC36509." evidence="7" ref="2">
    <original>Q</original>
    <variation>R</variation>
    <location>
        <position position="530"/>
    </location>
</feature>
<feature type="sequence conflict" description="In Ref. 2; AAC36509." evidence="7" ref="2">
    <original>I</original>
    <variation>T</variation>
    <location>
        <position position="572"/>
    </location>
</feature>
<keyword id="KW-0007">Acetylation</keyword>
<keyword id="KW-0067">ATP-binding</keyword>
<keyword id="KW-0131">Cell cycle</keyword>
<keyword id="KW-0158">Chromosome</keyword>
<keyword id="KW-0235">DNA replication</keyword>
<keyword id="KW-0238">DNA-binding</keyword>
<keyword id="KW-0347">Helicase</keyword>
<keyword id="KW-0378">Hydrolase</keyword>
<keyword id="KW-1017">Isopeptide bond</keyword>
<keyword id="KW-0547">Nucleotide-binding</keyword>
<keyword id="KW-0539">Nucleus</keyword>
<keyword id="KW-0597">Phosphoprotein</keyword>
<keyword id="KW-1185">Reference proteome</keyword>
<keyword id="KW-0832">Ubl conjugation</keyword>